<feature type="chain" id="PRO_0000203343" description="tRNA (32-2'-O)-methyltransferase regulator TRM732">
    <location>
        <begin position="1"/>
        <end position="1420"/>
    </location>
</feature>
<feature type="region of interest" description="Required for activity" evidence="6">
    <location>
        <begin position="748"/>
        <end position="754"/>
    </location>
</feature>
<feature type="mutagenesis site" description="Mildly decreases methylation of the 2'-O-ribose of cytidine at position 32 of the tRNA anticodon loop of tRNA(Phe)." evidence="6">
    <original>RH</original>
    <variation>AA</variation>
    <location>
        <begin position="701"/>
        <end position="702"/>
    </location>
</feature>
<feature type="mutagenesis site" description="Mildly decreases methylation of the 2'-O-ribose of cytidine at position 32 of the tRNA anticodon loop of tRNA(Phe)." evidence="6">
    <original>RRSGGLP</original>
    <variation>AAAGAAA</variation>
    <location>
        <begin position="748"/>
        <end position="754"/>
    </location>
</feature>
<feature type="mutagenesis site" description="Severely decreases methylation of the 2'-O-ribose of cytidine at position 32 of the tRNA anticodon loop of tRNA(Phe)." evidence="6">
    <original>RRS</original>
    <variation>AAA</variation>
    <location>
        <begin position="748"/>
        <end position="750"/>
    </location>
</feature>
<feature type="mutagenesis site" description="Severely decreases methylation of the 2'-O-ribose of cytidine at position 32 of the tRNA anticodon loop of tRNA(Phe)." evidence="6">
    <original>GLP</original>
    <variation>AAA</variation>
    <location>
        <begin position="752"/>
        <end position="754"/>
    </location>
</feature>
<feature type="mutagenesis site" description="Severely decreases methylation of the 2'-O-ribose of cytidine at position 32 of the tRNA anticodon loop of tRNA(Phe)." evidence="6">
    <original>HG</original>
    <variation>AA</variation>
    <location>
        <begin position="975"/>
        <end position="976"/>
    </location>
</feature>
<proteinExistence type="evidence at protein level"/>
<evidence type="ECO:0000269" key="1">
    <source>
    </source>
</evidence>
<evidence type="ECO:0000269" key="2">
    <source>
    </source>
</evidence>
<evidence type="ECO:0000269" key="3">
    <source>
    </source>
</evidence>
<evidence type="ECO:0000269" key="4">
    <source>
    </source>
</evidence>
<evidence type="ECO:0000269" key="5">
    <source>
    </source>
</evidence>
<evidence type="ECO:0000269" key="6">
    <source>
    </source>
</evidence>
<evidence type="ECO:0000305" key="7"/>
<accession>Q03496</accession>
<accession>D6W085</accession>
<accession>Q04862</accession>
<reference key="1">
    <citation type="journal article" date="1997" name="Nature">
        <title>The nucleotide sequence of Saccharomyces cerevisiae chromosome XIII.</title>
        <authorList>
            <person name="Bowman S."/>
            <person name="Churcher C.M."/>
            <person name="Badcock K."/>
            <person name="Brown D."/>
            <person name="Chillingworth T."/>
            <person name="Connor R."/>
            <person name="Dedman K."/>
            <person name="Devlin K."/>
            <person name="Gentles S."/>
            <person name="Hamlin N."/>
            <person name="Hunt S."/>
            <person name="Jagels K."/>
            <person name="Lye G."/>
            <person name="Moule S."/>
            <person name="Odell C."/>
            <person name="Pearson D."/>
            <person name="Rajandream M.A."/>
            <person name="Rice P."/>
            <person name="Skelton J."/>
            <person name="Walsh S.V."/>
            <person name="Whitehead S."/>
            <person name="Barrell B.G."/>
        </authorList>
    </citation>
    <scope>NUCLEOTIDE SEQUENCE [LARGE SCALE GENOMIC DNA]</scope>
    <source>
        <strain>ATCC 204508 / S288c</strain>
    </source>
</reference>
<reference key="2">
    <citation type="journal article" date="2014" name="G3 (Bethesda)">
        <title>The reference genome sequence of Saccharomyces cerevisiae: Then and now.</title>
        <authorList>
            <person name="Engel S.R."/>
            <person name="Dietrich F.S."/>
            <person name="Fisk D.G."/>
            <person name="Binkley G."/>
            <person name="Balakrishnan R."/>
            <person name="Costanzo M.C."/>
            <person name="Dwight S.S."/>
            <person name="Hitz B.C."/>
            <person name="Karra K."/>
            <person name="Nash R.S."/>
            <person name="Weng S."/>
            <person name="Wong E.D."/>
            <person name="Lloyd P."/>
            <person name="Skrzypek M.S."/>
            <person name="Miyasato S.R."/>
            <person name="Simison M."/>
            <person name="Cherry J.M."/>
        </authorList>
    </citation>
    <scope>GENOME REANNOTATION</scope>
    <source>
        <strain>ATCC 204508 / S288c</strain>
    </source>
</reference>
<reference key="3">
    <citation type="journal article" date="2003" name="Nature">
        <title>Global analysis of protein localization in budding yeast.</title>
        <authorList>
            <person name="Huh W.-K."/>
            <person name="Falvo J.V."/>
            <person name="Gerke L.C."/>
            <person name="Carroll A.S."/>
            <person name="Howson R.W."/>
            <person name="Weissman J.S."/>
            <person name="O'Shea E.K."/>
        </authorList>
    </citation>
    <scope>SUBCELLULAR LOCATION [LARGE SCALE ANALYSIS]</scope>
</reference>
<reference key="4">
    <citation type="journal article" date="2003" name="Nature">
        <title>Global analysis of protein expression in yeast.</title>
        <authorList>
            <person name="Ghaemmaghami S."/>
            <person name="Huh W.-K."/>
            <person name="Bower K."/>
            <person name="Howson R.W."/>
            <person name="Belle A."/>
            <person name="Dephoure N."/>
            <person name="O'Shea E.K."/>
            <person name="Weissman J.S."/>
        </authorList>
    </citation>
    <scope>LEVEL OF PROTEIN EXPRESSION [LARGE SCALE ANALYSIS]</scope>
</reference>
<reference key="5">
    <citation type="journal article" date="2012" name="RNA">
        <title>Yeast Trm7 interacts with distinct proteins for critical modifications of the tRNAPhe anticodon loop.</title>
        <authorList>
            <person name="Guy M.P."/>
            <person name="Podyma B.M."/>
            <person name="Preston M.A."/>
            <person name="Shaheen H.H."/>
            <person name="Krivos K.L."/>
            <person name="Limbach P.A."/>
            <person name="Hopper A.K."/>
            <person name="Phizicky E.M."/>
        </authorList>
    </citation>
    <scope>FUNCTION</scope>
    <scope>INTERACTION WITH TRM7</scope>
</reference>
<reference key="6">
    <citation type="journal article" date="2015" name="Hum. Mutat.">
        <title>Defects in tRNA Anticodon Loop 2'-O-Methylation Are Implicated in Nonsyndromic X-Linked Intellectual Disability due to Mutations in FTSJ1.</title>
        <authorList>
            <person name="Guy M.P."/>
            <person name="Shaw M."/>
            <person name="Weiner C.L."/>
            <person name="Hobson L."/>
            <person name="Stark Z."/>
            <person name="Rose K."/>
            <person name="Kalscheuer V.M."/>
            <person name="Gecz J."/>
            <person name="Phizicky E.M."/>
        </authorList>
    </citation>
    <scope>INTERACTION WITH TRM7</scope>
</reference>
<reference key="7">
    <citation type="journal article" date="2018" name="PLoS Genet.">
        <title>Lack of 2'-O-methylation in the tRNA anticodon loop of two phylogenetically distant yeast species activates the general amino acid control pathway.</title>
        <authorList>
            <person name="Han L."/>
            <person name="Guy M.P."/>
            <person name="Kon Y."/>
            <person name="Phizicky E.M."/>
        </authorList>
    </citation>
    <scope>DISRUPTION PHENOTYPE</scope>
</reference>
<reference key="8">
    <citation type="journal article" date="2022" name="ACS Omega">
        <title>Identification of a Trm732 Motif Required for 2'-O-methylation of the tRNA Anticodon Loop by Trm7.</title>
        <authorList>
            <person name="Funk H.M."/>
            <person name="DiVita D.J."/>
            <person name="Sizemore H.E."/>
            <person name="Wehrle K."/>
            <person name="Miller C.L.W."/>
            <person name="Fraley M.E."/>
            <person name="Mullins A.K."/>
            <person name="Guy A.R."/>
            <person name="Phizicky E.M."/>
            <person name="Guy M.P."/>
        </authorList>
    </citation>
    <scope>FUNCTION</scope>
    <scope>DISRUPTION PHENOTYPE</scope>
    <scope>MUTAGENESIS OF 701-ARG-HIS-702; 748-ARG--PRO-754; 748-ARG--SER-750; 752-GLY--PRO-754 AND 975-HIS-GLY-976</scope>
</reference>
<gene>
    <name type="primary">TRM732</name>
    <name type="ordered locus">YMR259C</name>
    <name type="ORF">YM8156.01C</name>
    <name type="ORF">YM9920.13C</name>
</gene>
<comment type="function">
    <text evidence="3 6">Together with methyltransferase TRM7, methylates the 2'-O-ribose of nucleotides at position 32 of the anticodon loop of substrate tRNAs.</text>
</comment>
<comment type="subunit">
    <text evidence="3 4">Interacts with TRM7; for 2'-O-methylation of position 32 in substrate tRNAs.</text>
</comment>
<comment type="subcellular location">
    <subcellularLocation>
        <location evidence="1">Cytoplasm</location>
    </subcellularLocation>
</comment>
<comment type="disruption phenotype">
    <text evidence="5 6">Loss of methylation of the 2'-O-ribose of cytidine at position 32 of tRNA(Phe) (PubMed:35559166). Increases occurrence of 1-methylguanosine residue at position 37 tRNA anticodon loop of tRNA(Phe), indicative of a loss of wybutosine at this position (PubMed:35559166). Simultaneous knockout of RTT10/TRM734 leads to activation of the general control amino acid (GAAC) response and severely decreases cell population growth (PubMed:29596413, PubMed:35559166).</text>
</comment>
<comment type="miscellaneous">
    <text evidence="2">Present with 7110 molecules/cell in log phase SD medium.</text>
</comment>
<comment type="similarity">
    <text evidence="7">Belongs to the THADA family.</text>
</comment>
<protein>
    <recommendedName>
        <fullName evidence="7">tRNA (32-2'-O)-methyltransferase regulator TRM732</fullName>
    </recommendedName>
</protein>
<name>THADA_YEAST</name>
<organism>
    <name type="scientific">Saccharomyces cerevisiae (strain ATCC 204508 / S288c)</name>
    <name type="common">Baker's yeast</name>
    <dbReference type="NCBI Taxonomy" id="559292"/>
    <lineage>
        <taxon>Eukaryota</taxon>
        <taxon>Fungi</taxon>
        <taxon>Dikarya</taxon>
        <taxon>Ascomycota</taxon>
        <taxon>Saccharomycotina</taxon>
        <taxon>Saccharomycetes</taxon>
        <taxon>Saccharomycetales</taxon>
        <taxon>Saccharomycetaceae</taxon>
        <taxon>Saccharomyces</taxon>
    </lineage>
</organism>
<dbReference type="EMBL" id="Z49260">
    <property type="protein sequence ID" value="CAA89242.1"/>
    <property type="molecule type" value="Genomic_DNA"/>
</dbReference>
<dbReference type="EMBL" id="Z48639">
    <property type="protein sequence ID" value="CAA88586.1"/>
    <property type="molecule type" value="Genomic_DNA"/>
</dbReference>
<dbReference type="EMBL" id="BK006946">
    <property type="protein sequence ID" value="DAA10159.1"/>
    <property type="molecule type" value="Genomic_DNA"/>
</dbReference>
<dbReference type="PIR" id="S54471">
    <property type="entry name" value="S54471"/>
</dbReference>
<dbReference type="RefSeq" id="NP_013986.1">
    <property type="nucleotide sequence ID" value="NM_001182766.1"/>
</dbReference>
<dbReference type="BioGRID" id="35437">
    <property type="interactions" value="38"/>
</dbReference>
<dbReference type="FunCoup" id="Q03496">
    <property type="interactions" value="50"/>
</dbReference>
<dbReference type="IntAct" id="Q03496">
    <property type="interactions" value="4"/>
</dbReference>
<dbReference type="MINT" id="Q03496"/>
<dbReference type="STRING" id="4932.YMR259C"/>
<dbReference type="GlyGen" id="Q03496">
    <property type="glycosylation" value="2 sites, 1 O-linked glycan (2 sites)"/>
</dbReference>
<dbReference type="iPTMnet" id="Q03496"/>
<dbReference type="PaxDb" id="4932-YMR259C"/>
<dbReference type="PeptideAtlas" id="Q03496"/>
<dbReference type="EnsemblFungi" id="YMR259C_mRNA">
    <property type="protein sequence ID" value="YMR259C"/>
    <property type="gene ID" value="YMR259C"/>
</dbReference>
<dbReference type="GeneID" id="855301"/>
<dbReference type="KEGG" id="sce:YMR259C"/>
<dbReference type="AGR" id="SGD:S000004872"/>
<dbReference type="SGD" id="S000004872">
    <property type="gene designation" value="TRM732"/>
</dbReference>
<dbReference type="VEuPathDB" id="FungiDB:YMR259C"/>
<dbReference type="eggNOG" id="KOG1810">
    <property type="taxonomic scope" value="Eukaryota"/>
</dbReference>
<dbReference type="GeneTree" id="ENSGT00390000015500"/>
<dbReference type="HOGENOM" id="CLU_001011_2_0_1"/>
<dbReference type="InParanoid" id="Q03496"/>
<dbReference type="OMA" id="TQHITRR"/>
<dbReference type="OrthoDB" id="73997at2759"/>
<dbReference type="BioCyc" id="YEAST:G3O-32934-MONOMER"/>
<dbReference type="BioGRID-ORCS" id="855301">
    <property type="hits" value="0 hits in 10 CRISPR screens"/>
</dbReference>
<dbReference type="PRO" id="PR:Q03496"/>
<dbReference type="Proteomes" id="UP000002311">
    <property type="component" value="Chromosome XIII"/>
</dbReference>
<dbReference type="RNAct" id="Q03496">
    <property type="molecule type" value="protein"/>
</dbReference>
<dbReference type="GO" id="GO:0005737">
    <property type="term" value="C:cytoplasm"/>
    <property type="evidence" value="ECO:0007005"/>
    <property type="project" value="SGD"/>
</dbReference>
<dbReference type="GO" id="GO:0030488">
    <property type="term" value="P:tRNA methylation"/>
    <property type="evidence" value="ECO:0000318"/>
    <property type="project" value="GO_Central"/>
</dbReference>
<dbReference type="GO" id="GO:0002128">
    <property type="term" value="P:tRNA nucleoside ribose methylation"/>
    <property type="evidence" value="ECO:0000315"/>
    <property type="project" value="UniProtKB"/>
</dbReference>
<dbReference type="GO" id="GO:0002130">
    <property type="term" value="P:wobble position ribose methylation"/>
    <property type="evidence" value="ECO:0000315"/>
    <property type="project" value="SGD"/>
</dbReference>
<dbReference type="InterPro" id="IPR016024">
    <property type="entry name" value="ARM-type_fold"/>
</dbReference>
<dbReference type="InterPro" id="IPR056843">
    <property type="entry name" value="THADA-like_TPR"/>
</dbReference>
<dbReference type="InterPro" id="IPR056842">
    <property type="entry name" value="THADA-like_TPR_C"/>
</dbReference>
<dbReference type="InterPro" id="IPR019442">
    <property type="entry name" value="THADA/TRM732_DUF2428"/>
</dbReference>
<dbReference type="InterPro" id="IPR051954">
    <property type="entry name" value="tRNA_methyltransferase_THADA"/>
</dbReference>
<dbReference type="PANTHER" id="PTHR14387:SF0">
    <property type="entry name" value="DUF2428 DOMAIN-CONTAINING PROTEIN"/>
    <property type="match status" value="1"/>
</dbReference>
<dbReference type="PANTHER" id="PTHR14387">
    <property type="entry name" value="THADA/DEATH RECEPTOR INTERACTING PROTEIN"/>
    <property type="match status" value="1"/>
</dbReference>
<dbReference type="Pfam" id="PF10350">
    <property type="entry name" value="DUF2428"/>
    <property type="match status" value="1"/>
</dbReference>
<dbReference type="Pfam" id="PF25150">
    <property type="entry name" value="TPR_Trm732"/>
    <property type="match status" value="1"/>
</dbReference>
<dbReference type="Pfam" id="PF25151">
    <property type="entry name" value="TPR_Trm732_C"/>
    <property type="match status" value="1"/>
</dbReference>
<dbReference type="SUPFAM" id="SSF48371">
    <property type="entry name" value="ARM repeat"/>
    <property type="match status" value="1"/>
</dbReference>
<sequence>MTTDVQFSSQEIELFRVKEFLIANNPAKINNENKDAVLTQIEHDFRYLIQYIKDGLPNLNESTRLIFPDTFSICLLRSHQIIASKKIDSQEFLSAVKEQLLTEANANIIFEYVLDFWADGGAPLMNALRDLFSKLLNLLKITYPMSTLKDVLFNWMNEILEVPSTLRVQYYLIDALSSDFDLYYIIEKKPHFIDNSFSLMNSDLLANSVGKCIVSLLLNIYEKHFKKNESFVQEWIQLWKSCALKYIHDKQYTKSINLYIMIPLFKNMPNSAFTLFLECMSNKDPSLLLSLLKIGQELGIEEEPFCDNKYTTVDSVNKLIEQDEYKLQVFEILTFSTKKSKPIRPFVFKTIKQYLYVFFVDTELERRNYFCSSMKHFIFRTRDCAYSLARDARKLKKAEKFPDEQREKLAQVEEARAFLVWLCNFIKYNLAPGTLYQANVTSLKLMHILIKSGVDKSTPQKFLDNQNKREYPFSIPILQDVTFLRLLIDLLVSNYADVRELSKEMLFIMISADESRGLFLDTLDANALKWTATSLLSDYEKGDAGATVYEFIFTVMGSQRSFIDQTIDILAQMVQNLQNDSIGCAENSIGPHFAALSLILNKFNSEENHQDTSKIISKLINLVLKSWEATRNVVCHDSAHGILPEKYANCGVPDQVIISHAFRAIKEASYLLETILKKYPLTRDQLDSIGDLFIVQLSTIRHSGAFQAVLPGLKAFCIRCQLEFPAILEELLSKSVKSLKSKTQHITRRSGGLPFLVTTVLSAEVTKGRPLLQKTFENLLLVARLPIPPHQDEFDLPQVNAINCINAIFVEPKLSVHCTSFVSEALELALLNFDCDIWALRNCSIMLFTSLQNRIFGKVGRSVSAKLFFTKYSGLRQLLLNILNSSIAQYSGSERKSYQIESIFLVLNVLLRLRPTAGYTGLKEFNVSVYECLSNENWKIRDMASRVLHMLSENFEEEIRKLLDLASIAKQNQLHGHLLALQQLVPQYLSGTRDMELIQRILEKKRMLLLENKCFITKKAYLKLTCCILETCDIPDSILKDYISTLRNTFIAENNEYVVDGSKQLYLAQILDMLLKYEDSIYLDDICLLGLYSPFYEAQLSTLQYMNTNFHWETTRNSEFLEQLQLLLRVPDLLPMAKALVVKILSRKKNTLSLTTCTDLLKTNNSEDTKLAAVSSLSAKLSSQTFHQVWNLLQGFFADSCSKDFRLASLECLTAYPESCKNSRILLQLYNFLWDDDSEIREKASFYLNKNFIQTADWEYNRNTSVTALIFTKKFVDVFTSSEVVEELCLQLFQYLNEYDMFAAEESAKNCLFTIEKDNQFINELQKAMHILNMIKLTGRDISKCYKDQIHHLKSALLEHFNTEDFKDSPLGWCSNAEIFSRITLLKELIQHYSPSDYENFINVLTKHSVHPLIISYSQL</sequence>
<keyword id="KW-0963">Cytoplasm</keyword>
<keyword id="KW-1185">Reference proteome</keyword>
<keyword id="KW-0819">tRNA processing</keyword>